<proteinExistence type="inferred from homology"/>
<sequence length="181" mass="19572">MSNTTLHATTIYAVRHNGKAAMAGDGQVTLGQQVIMKQTARKVRRLYEGKVLAGFAGSVADAFTLFEKFETKLQQFSGNLERAAVELAQEWRGDKQLRQLEAMLIVMDKDAILVVSGTGEVIAPDDDLIAIGSGGNYALSAGRALKRHASHLSAEEMAYESLKVAADICVFTNDNIVVETL</sequence>
<keyword id="KW-0021">Allosteric enzyme</keyword>
<keyword id="KW-0963">Cytoplasm</keyword>
<keyword id="KW-0378">Hydrolase</keyword>
<keyword id="KW-0479">Metal-binding</keyword>
<keyword id="KW-0645">Protease</keyword>
<keyword id="KW-0915">Sodium</keyword>
<keyword id="KW-0888">Threonine protease</keyword>
<comment type="function">
    <text evidence="1">Protease subunit of a proteasome-like degradation complex believed to be a general protein degrading machinery.</text>
</comment>
<comment type="catalytic activity">
    <reaction evidence="1">
        <text>ATP-dependent cleavage of peptide bonds with broad specificity.</text>
        <dbReference type="EC" id="3.4.25.2"/>
    </reaction>
</comment>
<comment type="activity regulation">
    <text evidence="1">Allosterically activated by HslU binding.</text>
</comment>
<comment type="subunit">
    <text evidence="1">A double ring-shaped homohexamer of HslV is capped on each side by a ring-shaped HslU homohexamer. The assembly of the HslU/HslV complex is dependent on binding of ATP.</text>
</comment>
<comment type="subcellular location">
    <subcellularLocation>
        <location evidence="1">Cytoplasm</location>
    </subcellularLocation>
</comment>
<comment type="similarity">
    <text evidence="1">Belongs to the peptidase T1B family. HslV subfamily.</text>
</comment>
<name>HSLV_STAAE</name>
<reference key="1">
    <citation type="journal article" date="2008" name="J. Bacteriol.">
        <title>Genome sequence of Staphylococcus aureus strain Newman and comparative analysis of staphylococcal genomes: polymorphism and evolution of two major pathogenicity islands.</title>
        <authorList>
            <person name="Baba T."/>
            <person name="Bae T."/>
            <person name="Schneewind O."/>
            <person name="Takeuchi F."/>
            <person name="Hiramatsu K."/>
        </authorList>
    </citation>
    <scope>NUCLEOTIDE SEQUENCE [LARGE SCALE GENOMIC DNA]</scope>
    <source>
        <strain>Newman</strain>
    </source>
</reference>
<organism>
    <name type="scientific">Staphylococcus aureus (strain Newman)</name>
    <dbReference type="NCBI Taxonomy" id="426430"/>
    <lineage>
        <taxon>Bacteria</taxon>
        <taxon>Bacillati</taxon>
        <taxon>Bacillota</taxon>
        <taxon>Bacilli</taxon>
        <taxon>Bacillales</taxon>
        <taxon>Staphylococcaceae</taxon>
        <taxon>Staphylococcus</taxon>
    </lineage>
</organism>
<feature type="chain" id="PRO_1000071847" description="ATP-dependent protease subunit HslV">
    <location>
        <begin position="1"/>
        <end position="181"/>
    </location>
</feature>
<feature type="active site" evidence="1">
    <location>
        <position position="9"/>
    </location>
</feature>
<feature type="binding site" evidence="1">
    <location>
        <position position="166"/>
    </location>
    <ligand>
        <name>Na(+)</name>
        <dbReference type="ChEBI" id="CHEBI:29101"/>
    </ligand>
</feature>
<feature type="binding site" evidence="1">
    <location>
        <position position="169"/>
    </location>
    <ligand>
        <name>Na(+)</name>
        <dbReference type="ChEBI" id="CHEBI:29101"/>
    </ligand>
</feature>
<feature type="binding site" evidence="1">
    <location>
        <position position="172"/>
    </location>
    <ligand>
        <name>Na(+)</name>
        <dbReference type="ChEBI" id="CHEBI:29101"/>
    </ligand>
</feature>
<protein>
    <recommendedName>
        <fullName evidence="1">ATP-dependent protease subunit HslV</fullName>
        <ecNumber evidence="1">3.4.25.2</ecNumber>
    </recommendedName>
</protein>
<evidence type="ECO:0000255" key="1">
    <source>
        <dbReference type="HAMAP-Rule" id="MF_00248"/>
    </source>
</evidence>
<gene>
    <name evidence="1" type="primary">hslV</name>
    <name type="ordered locus">NWMN_1163</name>
</gene>
<dbReference type="EC" id="3.4.25.2" evidence="1"/>
<dbReference type="EMBL" id="AP009351">
    <property type="protein sequence ID" value="BAF67435.1"/>
    <property type="molecule type" value="Genomic_DNA"/>
</dbReference>
<dbReference type="RefSeq" id="WP_000072681.1">
    <property type="nucleotide sequence ID" value="NZ_JBBIAE010000001.1"/>
</dbReference>
<dbReference type="SMR" id="A6QGF3"/>
<dbReference type="MEROPS" id="T01.007"/>
<dbReference type="KEGG" id="sae:NWMN_1163"/>
<dbReference type="HOGENOM" id="CLU_093872_1_1_9"/>
<dbReference type="Proteomes" id="UP000006386">
    <property type="component" value="Chromosome"/>
</dbReference>
<dbReference type="GO" id="GO:0009376">
    <property type="term" value="C:HslUV protease complex"/>
    <property type="evidence" value="ECO:0007669"/>
    <property type="project" value="UniProtKB-UniRule"/>
</dbReference>
<dbReference type="GO" id="GO:0005839">
    <property type="term" value="C:proteasome core complex"/>
    <property type="evidence" value="ECO:0007669"/>
    <property type="project" value="InterPro"/>
</dbReference>
<dbReference type="GO" id="GO:0046872">
    <property type="term" value="F:metal ion binding"/>
    <property type="evidence" value="ECO:0007669"/>
    <property type="project" value="UniProtKB-KW"/>
</dbReference>
<dbReference type="GO" id="GO:0004298">
    <property type="term" value="F:threonine-type endopeptidase activity"/>
    <property type="evidence" value="ECO:0007669"/>
    <property type="project" value="UniProtKB-KW"/>
</dbReference>
<dbReference type="GO" id="GO:0051603">
    <property type="term" value="P:proteolysis involved in protein catabolic process"/>
    <property type="evidence" value="ECO:0007669"/>
    <property type="project" value="InterPro"/>
</dbReference>
<dbReference type="CDD" id="cd01913">
    <property type="entry name" value="protease_HslV"/>
    <property type="match status" value="1"/>
</dbReference>
<dbReference type="Gene3D" id="3.60.20.10">
    <property type="entry name" value="Glutamine Phosphoribosylpyrophosphate, subunit 1, domain 1"/>
    <property type="match status" value="1"/>
</dbReference>
<dbReference type="HAMAP" id="MF_00248">
    <property type="entry name" value="HslV"/>
    <property type="match status" value="1"/>
</dbReference>
<dbReference type="InterPro" id="IPR022281">
    <property type="entry name" value="ATP-dep_Prtase_HsIV_su"/>
</dbReference>
<dbReference type="InterPro" id="IPR029055">
    <property type="entry name" value="Ntn_hydrolases_N"/>
</dbReference>
<dbReference type="InterPro" id="IPR001353">
    <property type="entry name" value="Proteasome_sua/b"/>
</dbReference>
<dbReference type="InterPro" id="IPR023333">
    <property type="entry name" value="Proteasome_suB-type"/>
</dbReference>
<dbReference type="NCBIfam" id="TIGR03692">
    <property type="entry name" value="ATP_dep_HslV"/>
    <property type="match status" value="1"/>
</dbReference>
<dbReference type="NCBIfam" id="NF003964">
    <property type="entry name" value="PRK05456.1"/>
    <property type="match status" value="1"/>
</dbReference>
<dbReference type="PANTHER" id="PTHR32194:SF0">
    <property type="entry name" value="ATP-DEPENDENT PROTEASE SUBUNIT HSLV"/>
    <property type="match status" value="1"/>
</dbReference>
<dbReference type="PANTHER" id="PTHR32194">
    <property type="entry name" value="METALLOPROTEASE TLDD"/>
    <property type="match status" value="1"/>
</dbReference>
<dbReference type="Pfam" id="PF00227">
    <property type="entry name" value="Proteasome"/>
    <property type="match status" value="1"/>
</dbReference>
<dbReference type="PIRSF" id="PIRSF039093">
    <property type="entry name" value="HslV"/>
    <property type="match status" value="1"/>
</dbReference>
<dbReference type="SUPFAM" id="SSF56235">
    <property type="entry name" value="N-terminal nucleophile aminohydrolases (Ntn hydrolases)"/>
    <property type="match status" value="1"/>
</dbReference>
<dbReference type="PROSITE" id="PS51476">
    <property type="entry name" value="PROTEASOME_BETA_2"/>
    <property type="match status" value="1"/>
</dbReference>
<accession>A6QGF3</accession>